<gene>
    <name evidence="1" type="primary">tsaD</name>
    <name type="synonym">gcp</name>
    <name type="ordered locus">YPN_0506</name>
    <name type="ORF">YP516_0525</name>
</gene>
<proteinExistence type="inferred from homology"/>
<keyword id="KW-0012">Acyltransferase</keyword>
<keyword id="KW-0963">Cytoplasm</keyword>
<keyword id="KW-0408">Iron</keyword>
<keyword id="KW-0479">Metal-binding</keyword>
<keyword id="KW-0808">Transferase</keyword>
<keyword id="KW-0819">tRNA processing</keyword>
<feature type="chain" id="PRO_0000303626" description="tRNA N6-adenosine threonylcarbamoyltransferase">
    <location>
        <begin position="1"/>
        <end position="337"/>
    </location>
</feature>
<feature type="binding site" evidence="1">
    <location>
        <position position="111"/>
    </location>
    <ligand>
        <name>Fe cation</name>
        <dbReference type="ChEBI" id="CHEBI:24875"/>
    </ligand>
</feature>
<feature type="binding site" evidence="1">
    <location>
        <position position="115"/>
    </location>
    <ligand>
        <name>Fe cation</name>
        <dbReference type="ChEBI" id="CHEBI:24875"/>
    </ligand>
</feature>
<feature type="binding site" evidence="1">
    <location>
        <begin position="134"/>
        <end position="138"/>
    </location>
    <ligand>
        <name>substrate</name>
    </ligand>
</feature>
<feature type="binding site" evidence="1">
    <location>
        <position position="167"/>
    </location>
    <ligand>
        <name>substrate</name>
    </ligand>
</feature>
<feature type="binding site" evidence="1">
    <location>
        <position position="180"/>
    </location>
    <ligand>
        <name>substrate</name>
    </ligand>
</feature>
<feature type="binding site" evidence="1">
    <location>
        <position position="272"/>
    </location>
    <ligand>
        <name>substrate</name>
    </ligand>
</feature>
<feature type="binding site" evidence="1">
    <location>
        <position position="300"/>
    </location>
    <ligand>
        <name>Fe cation</name>
        <dbReference type="ChEBI" id="CHEBI:24875"/>
    </ligand>
</feature>
<sequence>MRVLGIETSCDETGIAVYDDKAGLLANQLYSQVKLHADYGGVVPELASRDHVRKTVPLIQAALKEANLSAKDIDAVAYTAGPGLVGALLVGATIGRALAFAWGVPAVPVHHMEGHLLAPMLEENAPEFPFVALLVSGGHTQLISVTGIGEYLLLGESVDDAAGEAFDKTAKLLGLDYPGGPMLSRMAQQGTVGRFTFPRPMTDRPGLDFSFSGLKTFAANTIRANGDDDQTRADIARAFEDAVVDTLAIKSKRALDQTGFKRLVIAGGVSANQTLRLKLADMMQKRGGEVFYARPEFCTDNGAMIAYAGMVRLRSNLNSELSVSVRPRWPLSELPKV</sequence>
<reference key="1">
    <citation type="journal article" date="2006" name="J. Bacteriol.">
        <title>Complete genome sequence of Yersinia pestis strains Antiqua and Nepal516: evidence of gene reduction in an emerging pathogen.</title>
        <authorList>
            <person name="Chain P.S.G."/>
            <person name="Hu P."/>
            <person name="Malfatti S.A."/>
            <person name="Radnedge L."/>
            <person name="Larimer F."/>
            <person name="Vergez L.M."/>
            <person name="Worsham P."/>
            <person name="Chu M.C."/>
            <person name="Andersen G.L."/>
        </authorList>
    </citation>
    <scope>NUCLEOTIDE SEQUENCE [LARGE SCALE GENOMIC DNA]</scope>
    <source>
        <strain>Nepal516</strain>
    </source>
</reference>
<reference key="2">
    <citation type="submission" date="2009-04" db="EMBL/GenBank/DDBJ databases">
        <title>Yersinia pestis Nepal516A whole genome shotgun sequencing project.</title>
        <authorList>
            <person name="Plunkett G. III"/>
            <person name="Anderson B.D."/>
            <person name="Baumler D.J."/>
            <person name="Burland V."/>
            <person name="Cabot E.L."/>
            <person name="Glasner J.D."/>
            <person name="Mau B."/>
            <person name="Neeno-Eckwall E."/>
            <person name="Perna N.T."/>
            <person name="Munk A.C."/>
            <person name="Tapia R."/>
            <person name="Green L.D."/>
            <person name="Rogers Y.C."/>
            <person name="Detter J.C."/>
            <person name="Bruce D.C."/>
            <person name="Brettin T.S."/>
        </authorList>
    </citation>
    <scope>NUCLEOTIDE SEQUENCE [LARGE SCALE GENOMIC DNA]</scope>
    <source>
        <strain>Nepal516</strain>
    </source>
</reference>
<dbReference type="EC" id="2.3.1.234" evidence="1"/>
<dbReference type="EMBL" id="CP000305">
    <property type="protein sequence ID" value="ABG16838.1"/>
    <property type="molecule type" value="Genomic_DNA"/>
</dbReference>
<dbReference type="EMBL" id="ACNQ01000006">
    <property type="protein sequence ID" value="EEO78296.1"/>
    <property type="molecule type" value="Genomic_DNA"/>
</dbReference>
<dbReference type="RefSeq" id="WP_002212201.1">
    <property type="nucleotide sequence ID" value="NZ_ACNQ01000006.1"/>
</dbReference>
<dbReference type="SMR" id="Q1CME2"/>
<dbReference type="GeneID" id="57973978"/>
<dbReference type="KEGG" id="ypn:YPN_0506"/>
<dbReference type="HOGENOM" id="CLU_023208_0_0_6"/>
<dbReference type="Proteomes" id="UP000008936">
    <property type="component" value="Chromosome"/>
</dbReference>
<dbReference type="GO" id="GO:0005737">
    <property type="term" value="C:cytoplasm"/>
    <property type="evidence" value="ECO:0007669"/>
    <property type="project" value="UniProtKB-SubCell"/>
</dbReference>
<dbReference type="GO" id="GO:0005506">
    <property type="term" value="F:iron ion binding"/>
    <property type="evidence" value="ECO:0007669"/>
    <property type="project" value="UniProtKB-UniRule"/>
</dbReference>
<dbReference type="GO" id="GO:0061711">
    <property type="term" value="F:N(6)-L-threonylcarbamoyladenine synthase activity"/>
    <property type="evidence" value="ECO:0007669"/>
    <property type="project" value="UniProtKB-EC"/>
</dbReference>
<dbReference type="GO" id="GO:0002949">
    <property type="term" value="P:tRNA threonylcarbamoyladenosine modification"/>
    <property type="evidence" value="ECO:0007669"/>
    <property type="project" value="UniProtKB-UniRule"/>
</dbReference>
<dbReference type="CDD" id="cd24133">
    <property type="entry name" value="ASKHA_NBD_TsaD_bac"/>
    <property type="match status" value="1"/>
</dbReference>
<dbReference type="FunFam" id="3.30.420.40:FF:000031">
    <property type="entry name" value="tRNA N6-adenosine threonylcarbamoyltransferase"/>
    <property type="match status" value="1"/>
</dbReference>
<dbReference type="Gene3D" id="3.30.420.40">
    <property type="match status" value="2"/>
</dbReference>
<dbReference type="HAMAP" id="MF_01445">
    <property type="entry name" value="TsaD"/>
    <property type="match status" value="1"/>
</dbReference>
<dbReference type="InterPro" id="IPR043129">
    <property type="entry name" value="ATPase_NBD"/>
</dbReference>
<dbReference type="InterPro" id="IPR000905">
    <property type="entry name" value="Gcp-like_dom"/>
</dbReference>
<dbReference type="InterPro" id="IPR017861">
    <property type="entry name" value="KAE1/TsaD"/>
</dbReference>
<dbReference type="InterPro" id="IPR017860">
    <property type="entry name" value="Peptidase_M22_CS"/>
</dbReference>
<dbReference type="InterPro" id="IPR022450">
    <property type="entry name" value="TsaD"/>
</dbReference>
<dbReference type="NCBIfam" id="TIGR00329">
    <property type="entry name" value="gcp_kae1"/>
    <property type="match status" value="1"/>
</dbReference>
<dbReference type="NCBIfam" id="TIGR03723">
    <property type="entry name" value="T6A_TsaD_YgjD"/>
    <property type="match status" value="1"/>
</dbReference>
<dbReference type="PANTHER" id="PTHR11735">
    <property type="entry name" value="TRNA N6-ADENOSINE THREONYLCARBAMOYLTRANSFERASE"/>
    <property type="match status" value="1"/>
</dbReference>
<dbReference type="PANTHER" id="PTHR11735:SF6">
    <property type="entry name" value="TRNA N6-ADENOSINE THREONYLCARBAMOYLTRANSFERASE, MITOCHONDRIAL"/>
    <property type="match status" value="1"/>
</dbReference>
<dbReference type="Pfam" id="PF00814">
    <property type="entry name" value="TsaD"/>
    <property type="match status" value="1"/>
</dbReference>
<dbReference type="PRINTS" id="PR00789">
    <property type="entry name" value="OSIALOPTASE"/>
</dbReference>
<dbReference type="SUPFAM" id="SSF53067">
    <property type="entry name" value="Actin-like ATPase domain"/>
    <property type="match status" value="1"/>
</dbReference>
<dbReference type="PROSITE" id="PS01016">
    <property type="entry name" value="GLYCOPROTEASE"/>
    <property type="match status" value="1"/>
</dbReference>
<organism>
    <name type="scientific">Yersinia pestis bv. Antiqua (strain Nepal516)</name>
    <dbReference type="NCBI Taxonomy" id="377628"/>
    <lineage>
        <taxon>Bacteria</taxon>
        <taxon>Pseudomonadati</taxon>
        <taxon>Pseudomonadota</taxon>
        <taxon>Gammaproteobacteria</taxon>
        <taxon>Enterobacterales</taxon>
        <taxon>Yersiniaceae</taxon>
        <taxon>Yersinia</taxon>
    </lineage>
</organism>
<protein>
    <recommendedName>
        <fullName evidence="1">tRNA N6-adenosine threonylcarbamoyltransferase</fullName>
        <ecNumber evidence="1">2.3.1.234</ecNumber>
    </recommendedName>
    <alternativeName>
        <fullName evidence="1">N6-L-threonylcarbamoyladenine synthase</fullName>
        <shortName evidence="1">t(6)A synthase</shortName>
    </alternativeName>
    <alternativeName>
        <fullName evidence="1">t(6)A37 threonylcarbamoyladenosine biosynthesis protein TsaD</fullName>
    </alternativeName>
    <alternativeName>
        <fullName evidence="1">tRNA threonylcarbamoyladenosine biosynthesis protein TsaD</fullName>
    </alternativeName>
</protein>
<comment type="function">
    <text evidence="1">Required for the formation of a threonylcarbamoyl group on adenosine at position 37 (t(6)A37) in tRNAs that read codons beginning with adenine. Is involved in the transfer of the threonylcarbamoyl moiety of threonylcarbamoyl-AMP (TC-AMP) to the N6 group of A37, together with TsaE and TsaB. TsaD likely plays a direct catalytic role in this reaction.</text>
</comment>
<comment type="catalytic activity">
    <reaction evidence="1">
        <text>L-threonylcarbamoyladenylate + adenosine(37) in tRNA = N(6)-L-threonylcarbamoyladenosine(37) in tRNA + AMP + H(+)</text>
        <dbReference type="Rhea" id="RHEA:37059"/>
        <dbReference type="Rhea" id="RHEA-COMP:10162"/>
        <dbReference type="Rhea" id="RHEA-COMP:10163"/>
        <dbReference type="ChEBI" id="CHEBI:15378"/>
        <dbReference type="ChEBI" id="CHEBI:73682"/>
        <dbReference type="ChEBI" id="CHEBI:74411"/>
        <dbReference type="ChEBI" id="CHEBI:74418"/>
        <dbReference type="ChEBI" id="CHEBI:456215"/>
        <dbReference type="EC" id="2.3.1.234"/>
    </reaction>
</comment>
<comment type="cofactor">
    <cofactor evidence="1">
        <name>Fe(2+)</name>
        <dbReference type="ChEBI" id="CHEBI:29033"/>
    </cofactor>
    <text evidence="1">Binds 1 Fe(2+) ion per subunit.</text>
</comment>
<comment type="subcellular location">
    <subcellularLocation>
        <location evidence="1">Cytoplasm</location>
    </subcellularLocation>
</comment>
<comment type="similarity">
    <text evidence="1">Belongs to the KAE1 / TsaD family.</text>
</comment>
<name>TSAD_YERPN</name>
<evidence type="ECO:0000255" key="1">
    <source>
        <dbReference type="HAMAP-Rule" id="MF_01445"/>
    </source>
</evidence>
<accession>Q1CME2</accession>
<accession>C4GP64</accession>